<reference key="1">
    <citation type="journal article" date="2007" name="Proc. Natl. Acad. Sci. U.S.A.">
        <title>Genome and proteome of long-chain alkane degrading Geobacillus thermodenitrificans NG80-2 isolated from a deep-subsurface oil reservoir.</title>
        <authorList>
            <person name="Feng L."/>
            <person name="Wang W."/>
            <person name="Cheng J."/>
            <person name="Ren Y."/>
            <person name="Zhao G."/>
            <person name="Gao C."/>
            <person name="Tang Y."/>
            <person name="Liu X."/>
            <person name="Han W."/>
            <person name="Peng X."/>
            <person name="Liu R."/>
            <person name="Wang L."/>
        </authorList>
    </citation>
    <scope>NUCLEOTIDE SEQUENCE [LARGE SCALE GENOMIC DNA]</scope>
    <source>
        <strain>NG80-2</strain>
    </source>
</reference>
<accession>A4IQZ4</accession>
<gene>
    <name evidence="1" type="primary">ispG</name>
    <name type="ordered locus">GTNG_2403</name>
</gene>
<evidence type="ECO:0000255" key="1">
    <source>
        <dbReference type="HAMAP-Rule" id="MF_00159"/>
    </source>
</evidence>
<name>ISPG_GEOTN</name>
<protein>
    <recommendedName>
        <fullName evidence="1">4-hydroxy-3-methylbut-2-en-1-yl diphosphate synthase (flavodoxin)</fullName>
        <ecNumber evidence="1">1.17.7.3</ecNumber>
    </recommendedName>
    <alternativeName>
        <fullName evidence="1">1-hydroxy-2-methyl-2-(E)-butenyl 4-diphosphate synthase</fullName>
    </alternativeName>
</protein>
<proteinExistence type="inferred from homology"/>
<sequence>MSEIIHRSKTRPVRVGSLTIGGNNEVIIQSMTTTKTHDVDATVAQIHRLEEAGCQIVRVACPDERAADAIPEIKKRINIPLVADIHFDYKLALKAIEGGVDKIRINPGNIGRREKVEAVVKAAKERGVPIRIGVNAGSLEKRILEKYGYPTAEGMVESALYHIRILEELDFHDIIVSLKASDVRLAIEAYEKAARTFDYPLHVGITEAGTLFSGTIKSAVGLGAILSKGIGNTIRISLSADPVEEVKVAREILKTFGLASNAATLISCPTCGRIEIDLISIANEIEDYIAKIKAPIKVAVLGCAVNGPGEAREADIGIAGARGEGLLFRHGKIVRKVPEEQMVEELKKEIDKLAEEYFAKQKEKEAALKGNAVE</sequence>
<dbReference type="EC" id="1.17.7.3" evidence="1"/>
<dbReference type="EMBL" id="CP000557">
    <property type="protein sequence ID" value="ABO67748.1"/>
    <property type="molecule type" value="Genomic_DNA"/>
</dbReference>
<dbReference type="RefSeq" id="WP_008879881.1">
    <property type="nucleotide sequence ID" value="NC_009328.1"/>
</dbReference>
<dbReference type="SMR" id="A4IQZ4"/>
<dbReference type="GeneID" id="87623450"/>
<dbReference type="KEGG" id="gtn:GTNG_2403"/>
<dbReference type="eggNOG" id="COG0821">
    <property type="taxonomic scope" value="Bacteria"/>
</dbReference>
<dbReference type="HOGENOM" id="CLU_042258_0_0_9"/>
<dbReference type="UniPathway" id="UPA00056">
    <property type="reaction ID" value="UER00096"/>
</dbReference>
<dbReference type="Proteomes" id="UP000001578">
    <property type="component" value="Chromosome"/>
</dbReference>
<dbReference type="GO" id="GO:0051539">
    <property type="term" value="F:4 iron, 4 sulfur cluster binding"/>
    <property type="evidence" value="ECO:0007669"/>
    <property type="project" value="UniProtKB-UniRule"/>
</dbReference>
<dbReference type="GO" id="GO:0046429">
    <property type="term" value="F:4-hydroxy-3-methylbut-2-en-1-yl diphosphate synthase activity (ferredoxin)"/>
    <property type="evidence" value="ECO:0007669"/>
    <property type="project" value="UniProtKB-UniRule"/>
</dbReference>
<dbReference type="GO" id="GO:0141197">
    <property type="term" value="F:4-hydroxy-3-methylbut-2-enyl-diphosphate synthase activity (flavodoxin)"/>
    <property type="evidence" value="ECO:0007669"/>
    <property type="project" value="UniProtKB-EC"/>
</dbReference>
<dbReference type="GO" id="GO:0005506">
    <property type="term" value="F:iron ion binding"/>
    <property type="evidence" value="ECO:0007669"/>
    <property type="project" value="InterPro"/>
</dbReference>
<dbReference type="GO" id="GO:0019288">
    <property type="term" value="P:isopentenyl diphosphate biosynthetic process, methylerythritol 4-phosphate pathway"/>
    <property type="evidence" value="ECO:0007669"/>
    <property type="project" value="UniProtKB-UniRule"/>
</dbReference>
<dbReference type="GO" id="GO:0016114">
    <property type="term" value="P:terpenoid biosynthetic process"/>
    <property type="evidence" value="ECO:0007669"/>
    <property type="project" value="InterPro"/>
</dbReference>
<dbReference type="FunFam" id="3.20.20.20:FF:000001">
    <property type="entry name" value="4-hydroxy-3-methylbut-2-en-1-yl diphosphate synthase (flavodoxin)"/>
    <property type="match status" value="1"/>
</dbReference>
<dbReference type="FunFam" id="3.30.413.10:FF:000005">
    <property type="entry name" value="4-hydroxy-3-methylbut-2-en-1-yl diphosphate synthase (flavodoxin)"/>
    <property type="match status" value="1"/>
</dbReference>
<dbReference type="Gene3D" id="3.20.20.20">
    <property type="entry name" value="Dihydropteroate synthase-like"/>
    <property type="match status" value="1"/>
</dbReference>
<dbReference type="Gene3D" id="3.30.413.10">
    <property type="entry name" value="Sulfite Reductase Hemoprotein, domain 1"/>
    <property type="match status" value="1"/>
</dbReference>
<dbReference type="HAMAP" id="MF_00159">
    <property type="entry name" value="IspG"/>
    <property type="match status" value="1"/>
</dbReference>
<dbReference type="InterPro" id="IPR011005">
    <property type="entry name" value="Dihydropteroate_synth-like_sf"/>
</dbReference>
<dbReference type="InterPro" id="IPR016425">
    <property type="entry name" value="IspG_bac"/>
</dbReference>
<dbReference type="InterPro" id="IPR004588">
    <property type="entry name" value="IspG_bac-typ"/>
</dbReference>
<dbReference type="InterPro" id="IPR045854">
    <property type="entry name" value="NO2/SO3_Rdtase_4Fe4S_sf"/>
</dbReference>
<dbReference type="NCBIfam" id="TIGR00612">
    <property type="entry name" value="ispG_gcpE"/>
    <property type="match status" value="1"/>
</dbReference>
<dbReference type="NCBIfam" id="NF001540">
    <property type="entry name" value="PRK00366.1"/>
    <property type="match status" value="1"/>
</dbReference>
<dbReference type="PANTHER" id="PTHR30454">
    <property type="entry name" value="4-HYDROXY-3-METHYLBUT-2-EN-1-YL DIPHOSPHATE SYNTHASE"/>
    <property type="match status" value="1"/>
</dbReference>
<dbReference type="PANTHER" id="PTHR30454:SF0">
    <property type="entry name" value="4-HYDROXY-3-METHYLBUT-2-EN-1-YL DIPHOSPHATE SYNTHASE (FERREDOXIN), CHLOROPLASTIC"/>
    <property type="match status" value="1"/>
</dbReference>
<dbReference type="Pfam" id="PF04551">
    <property type="entry name" value="GcpE"/>
    <property type="match status" value="1"/>
</dbReference>
<dbReference type="PIRSF" id="PIRSF004640">
    <property type="entry name" value="IspG"/>
    <property type="match status" value="1"/>
</dbReference>
<dbReference type="SUPFAM" id="SSF51717">
    <property type="entry name" value="Dihydropteroate synthetase-like"/>
    <property type="match status" value="1"/>
</dbReference>
<dbReference type="SUPFAM" id="SSF56014">
    <property type="entry name" value="Nitrite and sulphite reductase 4Fe-4S domain-like"/>
    <property type="match status" value="1"/>
</dbReference>
<feature type="chain" id="PRO_1000011469" description="4-hydroxy-3-methylbut-2-en-1-yl diphosphate synthase (flavodoxin)">
    <location>
        <begin position="1"/>
        <end position="374"/>
    </location>
</feature>
<feature type="binding site" evidence="1">
    <location>
        <position position="268"/>
    </location>
    <ligand>
        <name>[4Fe-4S] cluster</name>
        <dbReference type="ChEBI" id="CHEBI:49883"/>
    </ligand>
</feature>
<feature type="binding site" evidence="1">
    <location>
        <position position="271"/>
    </location>
    <ligand>
        <name>[4Fe-4S] cluster</name>
        <dbReference type="ChEBI" id="CHEBI:49883"/>
    </ligand>
</feature>
<feature type="binding site" evidence="1">
    <location>
        <position position="303"/>
    </location>
    <ligand>
        <name>[4Fe-4S] cluster</name>
        <dbReference type="ChEBI" id="CHEBI:49883"/>
    </ligand>
</feature>
<feature type="binding site" evidence="1">
    <location>
        <position position="310"/>
    </location>
    <ligand>
        <name>[4Fe-4S] cluster</name>
        <dbReference type="ChEBI" id="CHEBI:49883"/>
    </ligand>
</feature>
<keyword id="KW-0004">4Fe-4S</keyword>
<keyword id="KW-0408">Iron</keyword>
<keyword id="KW-0411">Iron-sulfur</keyword>
<keyword id="KW-0414">Isoprene biosynthesis</keyword>
<keyword id="KW-0479">Metal-binding</keyword>
<keyword id="KW-0560">Oxidoreductase</keyword>
<comment type="function">
    <text evidence="1">Converts 2C-methyl-D-erythritol 2,4-cyclodiphosphate (ME-2,4cPP) into 1-hydroxy-2-methyl-2-(E)-butenyl 4-diphosphate.</text>
</comment>
<comment type="catalytic activity">
    <reaction evidence="1">
        <text>(2E)-4-hydroxy-3-methylbut-2-enyl diphosphate + oxidized [flavodoxin] + H2O + 2 H(+) = 2-C-methyl-D-erythritol 2,4-cyclic diphosphate + reduced [flavodoxin]</text>
        <dbReference type="Rhea" id="RHEA:43604"/>
        <dbReference type="Rhea" id="RHEA-COMP:10622"/>
        <dbReference type="Rhea" id="RHEA-COMP:10623"/>
        <dbReference type="ChEBI" id="CHEBI:15377"/>
        <dbReference type="ChEBI" id="CHEBI:15378"/>
        <dbReference type="ChEBI" id="CHEBI:57618"/>
        <dbReference type="ChEBI" id="CHEBI:58210"/>
        <dbReference type="ChEBI" id="CHEBI:58483"/>
        <dbReference type="ChEBI" id="CHEBI:128753"/>
        <dbReference type="EC" id="1.17.7.3"/>
    </reaction>
</comment>
<comment type="cofactor">
    <cofactor evidence="1">
        <name>[4Fe-4S] cluster</name>
        <dbReference type="ChEBI" id="CHEBI:49883"/>
    </cofactor>
    <text evidence="1">Binds 1 [4Fe-4S] cluster.</text>
</comment>
<comment type="pathway">
    <text evidence="1">Isoprenoid biosynthesis; isopentenyl diphosphate biosynthesis via DXP pathway; isopentenyl diphosphate from 1-deoxy-D-xylulose 5-phosphate: step 5/6.</text>
</comment>
<comment type="similarity">
    <text evidence="1">Belongs to the IspG family.</text>
</comment>
<organism>
    <name type="scientific">Geobacillus thermodenitrificans (strain NG80-2)</name>
    <dbReference type="NCBI Taxonomy" id="420246"/>
    <lineage>
        <taxon>Bacteria</taxon>
        <taxon>Bacillati</taxon>
        <taxon>Bacillota</taxon>
        <taxon>Bacilli</taxon>
        <taxon>Bacillales</taxon>
        <taxon>Anoxybacillaceae</taxon>
        <taxon>Geobacillus</taxon>
    </lineage>
</organism>